<evidence type="ECO:0000250" key="1">
    <source>
        <dbReference type="UniProtKB" id="P80561"/>
    </source>
</evidence>
<evidence type="ECO:0000250" key="2">
    <source>
        <dbReference type="UniProtKB" id="Q9HZQ8"/>
    </source>
</evidence>
<evidence type="ECO:0000255" key="3"/>
<evidence type="ECO:0000255" key="4">
    <source>
        <dbReference type="PROSITE-ProRule" id="PRU00303"/>
    </source>
</evidence>
<evidence type="ECO:0000269" key="5">
    <source>
    </source>
</evidence>
<evidence type="ECO:0000303" key="6">
    <source>
    </source>
</evidence>
<evidence type="ECO:0000305" key="7"/>
<evidence type="ECO:0000305" key="8">
    <source>
    </source>
</evidence>
<dbReference type="EC" id="3.4.11.1" evidence="2"/>
<dbReference type="EMBL" id="AL123456">
    <property type="protein sequence ID" value="CCP43149.1"/>
    <property type="molecule type" value="Genomic_DNA"/>
</dbReference>
<dbReference type="RefSeq" id="NP_214932.1">
    <property type="nucleotide sequence ID" value="NC_000962.3"/>
</dbReference>
<dbReference type="RefSeq" id="WP_003402133.1">
    <property type="nucleotide sequence ID" value="NZ_NVQJ01000002.1"/>
</dbReference>
<dbReference type="SMR" id="P96264"/>
<dbReference type="FunCoup" id="P96264">
    <property type="interactions" value="62"/>
</dbReference>
<dbReference type="STRING" id="83332.Rv0418"/>
<dbReference type="MEROPS" id="M28.001"/>
<dbReference type="MEROPS" id="M28.003"/>
<dbReference type="PaxDb" id="83332-Rv0418"/>
<dbReference type="DNASU" id="886381"/>
<dbReference type="GeneID" id="886381"/>
<dbReference type="KEGG" id="mtu:Rv0418"/>
<dbReference type="KEGG" id="mtv:RVBD_0418"/>
<dbReference type="PATRIC" id="fig|83332.111.peg.459"/>
<dbReference type="TubercuList" id="Rv0418"/>
<dbReference type="eggNOG" id="COG2234">
    <property type="taxonomic scope" value="Bacteria"/>
</dbReference>
<dbReference type="HOGENOM" id="CLU_024336_0_2_11"/>
<dbReference type="InParanoid" id="P96264"/>
<dbReference type="OrthoDB" id="345880at2"/>
<dbReference type="PhylomeDB" id="P96264"/>
<dbReference type="Proteomes" id="UP000001584">
    <property type="component" value="Chromosome"/>
</dbReference>
<dbReference type="GO" id="GO:0005576">
    <property type="term" value="C:extracellular region"/>
    <property type="evidence" value="ECO:0007005"/>
    <property type="project" value="MTBBASE"/>
</dbReference>
<dbReference type="GO" id="GO:0005886">
    <property type="term" value="C:plasma membrane"/>
    <property type="evidence" value="ECO:0007005"/>
    <property type="project" value="MTBBASE"/>
</dbReference>
<dbReference type="GO" id="GO:0004177">
    <property type="term" value="F:aminopeptidase activity"/>
    <property type="evidence" value="ECO:0007669"/>
    <property type="project" value="UniProtKB-KW"/>
</dbReference>
<dbReference type="GO" id="GO:0046872">
    <property type="term" value="F:metal ion binding"/>
    <property type="evidence" value="ECO:0007669"/>
    <property type="project" value="UniProtKB-KW"/>
</dbReference>
<dbReference type="GO" id="GO:0008235">
    <property type="term" value="F:metalloexopeptidase activity"/>
    <property type="evidence" value="ECO:0007669"/>
    <property type="project" value="InterPro"/>
</dbReference>
<dbReference type="GO" id="GO:0006508">
    <property type="term" value="P:proteolysis"/>
    <property type="evidence" value="ECO:0000318"/>
    <property type="project" value="GO_Central"/>
</dbReference>
<dbReference type="CDD" id="cd03876">
    <property type="entry name" value="M28_SGAP_like"/>
    <property type="match status" value="1"/>
</dbReference>
<dbReference type="CDD" id="cd04816">
    <property type="entry name" value="PA_SaNapH_like"/>
    <property type="match status" value="1"/>
</dbReference>
<dbReference type="FunFam" id="3.40.630.10:FF:000054">
    <property type="entry name" value="Peptide hydrolase"/>
    <property type="match status" value="1"/>
</dbReference>
<dbReference type="Gene3D" id="3.50.30.30">
    <property type="match status" value="1"/>
</dbReference>
<dbReference type="Gene3D" id="3.40.630.10">
    <property type="entry name" value="Zn peptidases"/>
    <property type="match status" value="1"/>
</dbReference>
<dbReference type="InterPro" id="IPR045175">
    <property type="entry name" value="M28_fam"/>
</dbReference>
<dbReference type="InterPro" id="IPR041756">
    <property type="entry name" value="M28_SGAP-like"/>
</dbReference>
<dbReference type="InterPro" id="IPR046450">
    <property type="entry name" value="PA_dom_sf"/>
</dbReference>
<dbReference type="InterPro" id="IPR003137">
    <property type="entry name" value="PA_domain"/>
</dbReference>
<dbReference type="InterPro" id="IPR007484">
    <property type="entry name" value="Peptidase_M28"/>
</dbReference>
<dbReference type="PANTHER" id="PTHR12147">
    <property type="entry name" value="METALLOPEPTIDASE M28 FAMILY MEMBER"/>
    <property type="match status" value="1"/>
</dbReference>
<dbReference type="PANTHER" id="PTHR12147:SF26">
    <property type="entry name" value="PEPTIDASE M28 DOMAIN-CONTAINING PROTEIN"/>
    <property type="match status" value="1"/>
</dbReference>
<dbReference type="Pfam" id="PF02225">
    <property type="entry name" value="PA"/>
    <property type="match status" value="1"/>
</dbReference>
<dbReference type="Pfam" id="PF04389">
    <property type="entry name" value="Peptidase_M28"/>
    <property type="match status" value="1"/>
</dbReference>
<dbReference type="SUPFAM" id="SSF52025">
    <property type="entry name" value="PA domain"/>
    <property type="match status" value="1"/>
</dbReference>
<dbReference type="SUPFAM" id="SSF53187">
    <property type="entry name" value="Zn-dependent exopeptidases"/>
    <property type="match status" value="1"/>
</dbReference>
<dbReference type="PROSITE" id="PS51257">
    <property type="entry name" value="PROKAR_LIPOPROTEIN"/>
    <property type="match status" value="1"/>
</dbReference>
<protein>
    <recommendedName>
        <fullName evidence="6">Probable lipoprotein aminopeptidase LpqL</fullName>
        <ecNumber evidence="2">3.4.11.1</ecNumber>
    </recommendedName>
    <alternativeName>
        <fullName>Leucine aminopeptidase</fullName>
    </alternativeName>
    <alternativeName>
        <fullName>Lipoprotein LpqL</fullName>
    </alternativeName>
</protein>
<comment type="function">
    <text evidence="2">An aminopeptidase; acts on free N-terminal amino groups with a very strong preference for Leu in the first position.</text>
</comment>
<comment type="catalytic activity">
    <reaction evidence="2">
        <text>Release of an N-terminal amino acid, Xaa-|-Yaa-, in which Xaa is preferably Leu, but may be other amino acids including Pro although not Arg or Lys, and Yaa may be Pro. Amino acid amides and methyl esters are also readily hydrolyzed, but rates on arylamides are exceedingly low.</text>
        <dbReference type="EC" id="3.4.11.1"/>
    </reaction>
</comment>
<comment type="cofactor">
    <cofactor evidence="1">
        <name>Zn(2+)</name>
        <dbReference type="ChEBI" id="CHEBI:29105"/>
    </cofactor>
    <text evidence="1">Binds 2 Zn(2+) ions per subunit.</text>
</comment>
<comment type="subcellular location">
    <subcellularLocation>
        <location evidence="4">Cell membrane</location>
        <topology evidence="4 8">Lipid-anchor</topology>
    </subcellularLocation>
</comment>
<comment type="PTM">
    <text evidence="5">Modified by Lgt on Cys-25 with an S-linked diacylglycerol with a mixture of C16 and C19 fatty acids (palmitic and tuberculostearic acid), signal peptide is removed by LspA, modified by Lnt with an amide-linked mixture of C16 and C19 fatty acids, expressed in M.bovis (PubMed:24093492).</text>
</comment>
<comment type="mass spectrometry">
    <text>Expressed in M.bovis, lipidated.</text>
</comment>
<comment type="similarity">
    <text evidence="7">Belongs to the peptidase M28 family. M28A subfamily.</text>
</comment>
<gene>
    <name type="primary">lpqL</name>
    <name type="ordered locus">Rv0418</name>
</gene>
<keyword id="KW-0031">Aminopeptidase</keyword>
<keyword id="KW-1003">Cell membrane</keyword>
<keyword id="KW-0378">Hydrolase</keyword>
<keyword id="KW-0449">Lipoprotein</keyword>
<keyword id="KW-0472">Membrane</keyword>
<keyword id="KW-0479">Metal-binding</keyword>
<keyword id="KW-0564">Palmitate</keyword>
<keyword id="KW-0645">Protease</keyword>
<keyword id="KW-1185">Reference proteome</keyword>
<keyword id="KW-0732">Signal</keyword>
<keyword id="KW-0862">Zinc</keyword>
<organism>
    <name type="scientific">Mycobacterium tuberculosis (strain ATCC 25618 / H37Rv)</name>
    <dbReference type="NCBI Taxonomy" id="83332"/>
    <lineage>
        <taxon>Bacteria</taxon>
        <taxon>Bacillati</taxon>
        <taxon>Actinomycetota</taxon>
        <taxon>Actinomycetes</taxon>
        <taxon>Mycobacteriales</taxon>
        <taxon>Mycobacteriaceae</taxon>
        <taxon>Mycobacterium</taxon>
        <taxon>Mycobacterium tuberculosis complex</taxon>
    </lineage>
</organism>
<name>LPQL_MYCTU</name>
<reference key="1">
    <citation type="journal article" date="1998" name="Nature">
        <title>Deciphering the biology of Mycobacterium tuberculosis from the complete genome sequence.</title>
        <authorList>
            <person name="Cole S.T."/>
            <person name="Brosch R."/>
            <person name="Parkhill J."/>
            <person name="Garnier T."/>
            <person name="Churcher C.M."/>
            <person name="Harris D.E."/>
            <person name="Gordon S.V."/>
            <person name="Eiglmeier K."/>
            <person name="Gas S."/>
            <person name="Barry C.E. III"/>
            <person name="Tekaia F."/>
            <person name="Badcock K."/>
            <person name="Basham D."/>
            <person name="Brown D."/>
            <person name="Chillingworth T."/>
            <person name="Connor R."/>
            <person name="Davies R.M."/>
            <person name="Devlin K."/>
            <person name="Feltwell T."/>
            <person name="Gentles S."/>
            <person name="Hamlin N."/>
            <person name="Holroyd S."/>
            <person name="Hornsby T."/>
            <person name="Jagels K."/>
            <person name="Krogh A."/>
            <person name="McLean J."/>
            <person name="Moule S."/>
            <person name="Murphy L.D."/>
            <person name="Oliver S."/>
            <person name="Osborne J."/>
            <person name="Quail M.A."/>
            <person name="Rajandream M.A."/>
            <person name="Rogers J."/>
            <person name="Rutter S."/>
            <person name="Seeger K."/>
            <person name="Skelton S."/>
            <person name="Squares S."/>
            <person name="Squares R."/>
            <person name="Sulston J.E."/>
            <person name="Taylor K."/>
            <person name="Whitehead S."/>
            <person name="Barrell B.G."/>
        </authorList>
    </citation>
    <scope>NUCLEOTIDE SEQUENCE [LARGE SCALE GENOMIC DNA]</scope>
    <source>
        <strain>ATCC 25618 / H37Rv</strain>
    </source>
</reference>
<reference key="2">
    <citation type="journal article" date="2011" name="Mol. Cell. Proteomics">
        <title>Proteogenomic analysis of Mycobacterium tuberculosis by high resolution mass spectrometry.</title>
        <authorList>
            <person name="Kelkar D.S."/>
            <person name="Kumar D."/>
            <person name="Kumar P."/>
            <person name="Balakrishnan L."/>
            <person name="Muthusamy B."/>
            <person name="Yadav A.K."/>
            <person name="Shrivastava P."/>
            <person name="Marimuthu A."/>
            <person name="Anand S."/>
            <person name="Sundaram H."/>
            <person name="Kingsbury R."/>
            <person name="Harsha H.C."/>
            <person name="Nair B."/>
            <person name="Prasad T.S."/>
            <person name="Chauhan D.S."/>
            <person name="Katoch K."/>
            <person name="Katoch V.M."/>
            <person name="Kumar P."/>
            <person name="Chaerkady R."/>
            <person name="Ramachandran S."/>
            <person name="Dash D."/>
            <person name="Pandey A."/>
        </authorList>
    </citation>
    <scope>IDENTIFICATION BY MASS SPECTROMETRY [LARGE SCALE ANALYSIS]</scope>
    <source>
        <strain>ATCC 25618 / H37Rv</strain>
    </source>
</reference>
<reference key="3">
    <citation type="journal article" date="2013" name="BMC Microbiol.">
        <title>Lipoproteins of slow-growing Mycobacteria carry three fatty acids and are N-acylated by apolipoprotein N-acyltransferase BCG_2070c.</title>
        <authorList>
            <person name="Bruelle J.K."/>
            <person name="Tschumi A."/>
            <person name="Sander P."/>
        </authorList>
    </citation>
    <scope>MASS SPECTROMETRY</scope>
    <scope>DIACYLGLYCEROL AT CYS-25</scope>
    <scope>PALMITOYLATION AT CYS-25</scope>
    <scope>LIPIDATION</scope>
    <scope>POST-TRANSLATIONAL MODIFICATIONS</scope>
    <scope>EXPRESSION IN M.BOVIS</scope>
    <source>
        <strain>H37Rv</strain>
    </source>
</reference>
<accession>P96264</accession>
<accession>F2GMD5</accession>
<accession>I6XV80</accession>
<accession>L0T5B2</accession>
<feature type="signal peptide" evidence="4">
    <location>
        <begin position="1"/>
        <end position="24"/>
    </location>
</feature>
<feature type="chain" id="PRO_0000434901" description="Probable lipoprotein aminopeptidase LpqL" evidence="4 8">
    <location>
        <begin position="25"/>
        <end position="500"/>
    </location>
</feature>
<feature type="domain" description="PA" evidence="3">
    <location>
        <begin position="140"/>
        <end position="231"/>
    </location>
</feature>
<feature type="active site" description="Proton acceptor" evidence="1">
    <location>
        <position position="316"/>
    </location>
</feature>
<feature type="binding site" evidence="1">
    <location>
        <position position="271"/>
    </location>
    <ligand>
        <name>Zn(2+)</name>
        <dbReference type="ChEBI" id="CHEBI:29105"/>
        <label>1</label>
        <note>catalytic</note>
    </ligand>
</feature>
<feature type="binding site" evidence="1">
    <location>
        <position position="283"/>
    </location>
    <ligand>
        <name>Zn(2+)</name>
        <dbReference type="ChEBI" id="CHEBI:29105"/>
        <label>1</label>
        <note>catalytic</note>
    </ligand>
</feature>
<feature type="binding site" evidence="1">
    <location>
        <position position="283"/>
    </location>
    <ligand>
        <name>Zn(2+)</name>
        <dbReference type="ChEBI" id="CHEBI:29105"/>
        <label>2</label>
        <note>catalytic</note>
    </ligand>
</feature>
<feature type="binding site" evidence="1">
    <location>
        <position position="317"/>
    </location>
    <ligand>
        <name>Zn(2+)</name>
        <dbReference type="ChEBI" id="CHEBI:29105"/>
        <label>2</label>
        <note>catalytic</note>
    </ligand>
</feature>
<feature type="binding site" evidence="1">
    <location>
        <position position="345"/>
    </location>
    <ligand>
        <name>Zn(2+)</name>
        <dbReference type="ChEBI" id="CHEBI:29105"/>
        <label>1</label>
        <note>catalytic</note>
    </ligand>
</feature>
<feature type="binding site" evidence="1">
    <location>
        <position position="448"/>
    </location>
    <ligand>
        <name>Zn(2+)</name>
        <dbReference type="ChEBI" id="CHEBI:29105"/>
        <label>2</label>
        <note>catalytic</note>
    </ligand>
</feature>
<feature type="site" description="Transition state stabilizer" evidence="1">
    <location>
        <position position="447"/>
    </location>
</feature>
<feature type="lipid moiety-binding region" description="N-palmitoyl cysteine" evidence="5">
    <location>
        <position position="25"/>
    </location>
</feature>
<feature type="lipid moiety-binding region" description="S-diacylglycerol cysteine" evidence="5">
    <location>
        <position position="25"/>
    </location>
</feature>
<sequence>MVNKSRMMPAVLAVAVVVAFLTTGCIRWSTQSRPVVNGPAAAEFAVALRNRVSTDAMMAHLSKLQDIANANDGTRAVGTPGYQASVDYVVNTLRNSGFDVQTPEFSARVFKAEKGVVTLGGNTVEARALEYSLGTPPDGVTGPLVAAPADDSPGCSPSDYDRLPVSGAVVLVDRGVCPFAQKEDAAAQRGAVALIIADNIDEQAMGGTLGANTDVKIPVVSVTKSVGFQLRGQSGPTTVKLTASTQSFKARNVIAQTKTGSSANVVMAGAHLDSVPEGPGINDNGSGVAAVLETAVQLGNSPHVSNAVRFAFWGAEEFGLIGSRNYVESLDIDALKGIALYLNFDMLASPNPGYFTYDGDQSLPLDARGQPVVPEGSAGIERTFVAYLKMAGKTAQDTSFDGRSDYDGFTLAGIPSGGLFSGAEVKKSAEQAELWGGTADEPFDPNYHQKTDTLDHIDRTALGINGAGVAYAVGLYAQDLGGPNGVPVMADRTRHLIAKP</sequence>
<proteinExistence type="evidence at protein level"/>